<feature type="signal peptide" evidence="3">
    <location>
        <begin position="1"/>
        <end position="26"/>
    </location>
</feature>
<feature type="chain" id="PRO_0000253316" description="Putative wall-associated receptor kinase-like 13">
    <location>
        <begin position="27"/>
        <end position="764"/>
    </location>
</feature>
<feature type="topological domain" description="Extracellular" evidence="3">
    <location>
        <begin position="27"/>
        <end position="379"/>
    </location>
</feature>
<feature type="transmembrane region" description="Helical" evidence="3">
    <location>
        <begin position="380"/>
        <end position="400"/>
    </location>
</feature>
<feature type="topological domain" description="Cytoplasmic" evidence="3">
    <location>
        <begin position="401"/>
        <end position="764"/>
    </location>
</feature>
<feature type="domain" description="Protein kinase" evidence="4">
    <location>
        <begin position="454"/>
        <end position="728"/>
    </location>
</feature>
<feature type="region of interest" description="Atypical EGF-like">
    <location>
        <begin position="308"/>
        <end position="372"/>
    </location>
</feature>
<feature type="active site" description="Proton acceptor" evidence="4 5">
    <location>
        <position position="579"/>
    </location>
</feature>
<feature type="binding site" evidence="4">
    <location>
        <begin position="460"/>
        <end position="468"/>
    </location>
    <ligand>
        <name>ATP</name>
        <dbReference type="ChEBI" id="CHEBI:30616"/>
    </ligand>
</feature>
<feature type="binding site" evidence="4">
    <location>
        <position position="482"/>
    </location>
    <ligand>
        <name>ATP</name>
        <dbReference type="ChEBI" id="CHEBI:30616"/>
    </ligand>
</feature>
<feature type="modified residue" description="Phosphotyrosine" evidence="2">
    <location>
        <position position="527"/>
    </location>
</feature>
<feature type="modified residue" description="Phosphothreonine" evidence="2">
    <location>
        <position position="613"/>
    </location>
</feature>
<feature type="modified residue" description="Phosphothreonine" evidence="2">
    <location>
        <position position="618"/>
    </location>
</feature>
<feature type="modified residue" description="Phosphotyrosine" evidence="2">
    <location>
        <position position="626"/>
    </location>
</feature>
<feature type="glycosylation site" description="N-linked (GlcNAc...) asparagine" evidence="3">
    <location>
        <position position="78"/>
    </location>
</feature>
<feature type="glycosylation site" description="N-linked (GlcNAc...) asparagine" evidence="3">
    <location>
        <position position="114"/>
    </location>
</feature>
<feature type="glycosylation site" description="N-linked (GlcNAc...) asparagine" evidence="3">
    <location>
        <position position="121"/>
    </location>
</feature>
<feature type="glycosylation site" description="N-linked (GlcNAc...) asparagine" evidence="3">
    <location>
        <position position="164"/>
    </location>
</feature>
<feature type="glycosylation site" description="N-linked (GlcNAc...) asparagine" evidence="3">
    <location>
        <position position="233"/>
    </location>
</feature>
<feature type="glycosylation site" description="N-linked (GlcNAc...) asparagine" evidence="3">
    <location>
        <position position="238"/>
    </location>
</feature>
<feature type="glycosylation site" description="N-linked (GlcNAc...) asparagine" evidence="3">
    <location>
        <position position="259"/>
    </location>
</feature>
<feature type="glycosylation site" description="N-linked (GlcNAc...) asparagine" evidence="3">
    <location>
        <position position="283"/>
    </location>
</feature>
<feature type="glycosylation site" description="N-linked (GlcNAc...) asparagine" evidence="3">
    <location>
        <position position="365"/>
    </location>
</feature>
<feature type="disulfide bond" evidence="1">
    <location>
        <begin position="310"/>
        <end position="323"/>
    </location>
</feature>
<feature type="disulfide bond" evidence="1">
    <location>
        <begin position="345"/>
        <end position="363"/>
    </location>
</feature>
<feature type="disulfide bond" evidence="1">
    <location>
        <begin position="352"/>
        <end position="372"/>
    </location>
</feature>
<organism>
    <name type="scientific">Arabidopsis thaliana</name>
    <name type="common">Mouse-ear cress</name>
    <dbReference type="NCBI Taxonomy" id="3702"/>
    <lineage>
        <taxon>Eukaryota</taxon>
        <taxon>Viridiplantae</taxon>
        <taxon>Streptophyta</taxon>
        <taxon>Embryophyta</taxon>
        <taxon>Tracheophyta</taxon>
        <taxon>Spermatophyta</taxon>
        <taxon>Magnoliopsida</taxon>
        <taxon>eudicotyledons</taxon>
        <taxon>Gunneridae</taxon>
        <taxon>Pentapetalae</taxon>
        <taxon>rosids</taxon>
        <taxon>malvids</taxon>
        <taxon>Brassicales</taxon>
        <taxon>Brassicaceae</taxon>
        <taxon>Camelineae</taxon>
        <taxon>Arabidopsis</taxon>
    </lineage>
</organism>
<keyword id="KW-0067">ATP-binding</keyword>
<keyword id="KW-1015">Disulfide bond</keyword>
<keyword id="KW-0325">Glycoprotein</keyword>
<keyword id="KW-0418">Kinase</keyword>
<keyword id="KW-0472">Membrane</keyword>
<keyword id="KW-0547">Nucleotide-binding</keyword>
<keyword id="KW-0597">Phosphoprotein</keyword>
<keyword id="KW-1185">Reference proteome</keyword>
<keyword id="KW-0723">Serine/threonine-protein kinase</keyword>
<keyword id="KW-0732">Signal</keyword>
<keyword id="KW-0808">Transferase</keyword>
<keyword id="KW-0812">Transmembrane</keyword>
<keyword id="KW-1133">Transmembrane helix</keyword>
<evidence type="ECO:0000250" key="1"/>
<evidence type="ECO:0000250" key="2">
    <source>
        <dbReference type="UniProtKB" id="O48814"/>
    </source>
</evidence>
<evidence type="ECO:0000255" key="3"/>
<evidence type="ECO:0000255" key="4">
    <source>
        <dbReference type="PROSITE-ProRule" id="PRU00159"/>
    </source>
</evidence>
<evidence type="ECO:0000255" key="5">
    <source>
        <dbReference type="PROSITE-ProRule" id="PRU10027"/>
    </source>
</evidence>
<evidence type="ECO:0000305" key="6"/>
<protein>
    <recommendedName>
        <fullName>Putative wall-associated receptor kinase-like 13</fullName>
        <ecNumber>2.7.11.-</ecNumber>
    </recommendedName>
</protein>
<accession>Q9LMT9</accession>
<proteinExistence type="inferred from homology"/>
<dbReference type="EC" id="2.7.11.-"/>
<dbReference type="EMBL" id="AC034106">
    <property type="protein sequence ID" value="AAF97270.1"/>
    <property type="molecule type" value="Genomic_DNA"/>
</dbReference>
<dbReference type="EMBL" id="CP002684">
    <property type="protein sequence ID" value="AEE29651.1"/>
    <property type="molecule type" value="Genomic_DNA"/>
</dbReference>
<dbReference type="PIR" id="C86314">
    <property type="entry name" value="C86314"/>
</dbReference>
<dbReference type="RefSeq" id="NP_173233.1">
    <property type="nucleotide sequence ID" value="NM_101654.1"/>
</dbReference>
<dbReference type="SMR" id="Q9LMT9"/>
<dbReference type="STRING" id="3702.Q9LMT9"/>
<dbReference type="GlyCosmos" id="Q9LMT9">
    <property type="glycosylation" value="9 sites, No reported glycans"/>
</dbReference>
<dbReference type="GlyGen" id="Q9LMT9">
    <property type="glycosylation" value="9 sites"/>
</dbReference>
<dbReference type="PaxDb" id="3702-AT1G17910.1"/>
<dbReference type="EnsemblPlants" id="AT1G17910.1">
    <property type="protein sequence ID" value="AT1G17910.1"/>
    <property type="gene ID" value="AT1G17910"/>
</dbReference>
<dbReference type="GeneID" id="838370"/>
<dbReference type="Gramene" id="AT1G17910.1">
    <property type="protein sequence ID" value="AT1G17910.1"/>
    <property type="gene ID" value="AT1G17910"/>
</dbReference>
<dbReference type="KEGG" id="ath:AT1G17910"/>
<dbReference type="Araport" id="AT1G17910"/>
<dbReference type="TAIR" id="AT1G17910"/>
<dbReference type="eggNOG" id="KOG1187">
    <property type="taxonomic scope" value="Eukaryota"/>
</dbReference>
<dbReference type="HOGENOM" id="CLU_000288_43_5_1"/>
<dbReference type="InParanoid" id="Q9LMT9"/>
<dbReference type="OMA" id="YASCACA"/>
<dbReference type="PhylomeDB" id="Q9LMT9"/>
<dbReference type="PRO" id="PR:Q9LMT9"/>
<dbReference type="Proteomes" id="UP000006548">
    <property type="component" value="Chromosome 1"/>
</dbReference>
<dbReference type="ExpressionAtlas" id="Q9LMT9">
    <property type="expression patterns" value="differential"/>
</dbReference>
<dbReference type="GO" id="GO:0016020">
    <property type="term" value="C:membrane"/>
    <property type="evidence" value="ECO:0007669"/>
    <property type="project" value="UniProtKB-SubCell"/>
</dbReference>
<dbReference type="GO" id="GO:0005524">
    <property type="term" value="F:ATP binding"/>
    <property type="evidence" value="ECO:0007669"/>
    <property type="project" value="UniProtKB-KW"/>
</dbReference>
<dbReference type="GO" id="GO:0106310">
    <property type="term" value="F:protein serine kinase activity"/>
    <property type="evidence" value="ECO:0007669"/>
    <property type="project" value="RHEA"/>
</dbReference>
<dbReference type="GO" id="GO:0004674">
    <property type="term" value="F:protein serine/threonine kinase activity"/>
    <property type="evidence" value="ECO:0007669"/>
    <property type="project" value="UniProtKB-KW"/>
</dbReference>
<dbReference type="GO" id="GO:0007166">
    <property type="term" value="P:cell surface receptor signaling pathway"/>
    <property type="evidence" value="ECO:0007669"/>
    <property type="project" value="InterPro"/>
</dbReference>
<dbReference type="FunFam" id="1.10.510.10:FF:000084">
    <property type="entry name" value="Wall-associated receptor kinase 2"/>
    <property type="match status" value="1"/>
</dbReference>
<dbReference type="FunFam" id="3.30.200.20:FF:000043">
    <property type="entry name" value="Wall-associated receptor kinase 2"/>
    <property type="match status" value="1"/>
</dbReference>
<dbReference type="Gene3D" id="2.10.25.10">
    <property type="entry name" value="Laminin"/>
    <property type="match status" value="1"/>
</dbReference>
<dbReference type="Gene3D" id="3.30.200.20">
    <property type="entry name" value="Phosphorylase Kinase, domain 1"/>
    <property type="match status" value="1"/>
</dbReference>
<dbReference type="Gene3D" id="1.10.510.10">
    <property type="entry name" value="Transferase(Phosphotransferase) domain 1"/>
    <property type="match status" value="1"/>
</dbReference>
<dbReference type="InterPro" id="IPR011009">
    <property type="entry name" value="Kinase-like_dom_sf"/>
</dbReference>
<dbReference type="InterPro" id="IPR000719">
    <property type="entry name" value="Prot_kinase_dom"/>
</dbReference>
<dbReference type="InterPro" id="IPR001245">
    <property type="entry name" value="Ser-Thr/Tyr_kinase_cat_dom"/>
</dbReference>
<dbReference type="InterPro" id="IPR008271">
    <property type="entry name" value="Ser/Thr_kinase_AS"/>
</dbReference>
<dbReference type="InterPro" id="IPR013695">
    <property type="entry name" value="WAK"/>
</dbReference>
<dbReference type="InterPro" id="IPR045274">
    <property type="entry name" value="WAK-like"/>
</dbReference>
<dbReference type="PANTHER" id="PTHR27005:SF239">
    <property type="entry name" value="WALL-ASSOCIATED RECEPTOR KINASE-LIKE 11-RELATED"/>
    <property type="match status" value="1"/>
</dbReference>
<dbReference type="PANTHER" id="PTHR27005">
    <property type="entry name" value="WALL-ASSOCIATED RECEPTOR KINASE-LIKE 21"/>
    <property type="match status" value="1"/>
</dbReference>
<dbReference type="Pfam" id="PF07714">
    <property type="entry name" value="PK_Tyr_Ser-Thr"/>
    <property type="match status" value="1"/>
</dbReference>
<dbReference type="Pfam" id="PF08488">
    <property type="entry name" value="WAK"/>
    <property type="match status" value="1"/>
</dbReference>
<dbReference type="SMART" id="SM00220">
    <property type="entry name" value="S_TKc"/>
    <property type="match status" value="1"/>
</dbReference>
<dbReference type="SUPFAM" id="SSF56112">
    <property type="entry name" value="Protein kinase-like (PK-like)"/>
    <property type="match status" value="1"/>
</dbReference>
<dbReference type="PROSITE" id="PS50011">
    <property type="entry name" value="PROTEIN_KINASE_DOM"/>
    <property type="match status" value="1"/>
</dbReference>
<dbReference type="PROSITE" id="PS00108">
    <property type="entry name" value="PROTEIN_KINASE_ST"/>
    <property type="match status" value="1"/>
</dbReference>
<comment type="function">
    <text>Putative serine/threonine-protein kinase that may function as a signaling receptor of extracellular matrix component.</text>
</comment>
<comment type="catalytic activity">
    <reaction>
        <text>L-seryl-[protein] + ATP = O-phospho-L-seryl-[protein] + ADP + H(+)</text>
        <dbReference type="Rhea" id="RHEA:17989"/>
        <dbReference type="Rhea" id="RHEA-COMP:9863"/>
        <dbReference type="Rhea" id="RHEA-COMP:11604"/>
        <dbReference type="ChEBI" id="CHEBI:15378"/>
        <dbReference type="ChEBI" id="CHEBI:29999"/>
        <dbReference type="ChEBI" id="CHEBI:30616"/>
        <dbReference type="ChEBI" id="CHEBI:83421"/>
        <dbReference type="ChEBI" id="CHEBI:456216"/>
    </reaction>
</comment>
<comment type="catalytic activity">
    <reaction>
        <text>L-threonyl-[protein] + ATP = O-phospho-L-threonyl-[protein] + ADP + H(+)</text>
        <dbReference type="Rhea" id="RHEA:46608"/>
        <dbReference type="Rhea" id="RHEA-COMP:11060"/>
        <dbReference type="Rhea" id="RHEA-COMP:11605"/>
        <dbReference type="ChEBI" id="CHEBI:15378"/>
        <dbReference type="ChEBI" id="CHEBI:30013"/>
        <dbReference type="ChEBI" id="CHEBI:30616"/>
        <dbReference type="ChEBI" id="CHEBI:61977"/>
        <dbReference type="ChEBI" id="CHEBI:456216"/>
    </reaction>
</comment>
<comment type="subcellular location">
    <subcellularLocation>
        <location evidence="6">Membrane</location>
        <topology evidence="6">Single-pass type I membrane protein</topology>
    </subcellularLocation>
</comment>
<comment type="domain">
    <text>The EGF-like region is specific to this family of proteins and seems to consist of the C-terminal of an EGF-like domain fused to the N-terminal of another one.</text>
</comment>
<comment type="similarity">
    <text evidence="4">Belongs to the protein kinase superfamily. Ser/Thr protein kinase family.</text>
</comment>
<gene>
    <name type="primary">WAKL13</name>
    <name type="ordered locus">At1g17910</name>
    <name type="ORF">F2H15.13</name>
</gene>
<name>WAKLL_ARATH</name>
<sequence length="764" mass="85212">MRGNKNYYFLSLLYFLSLPILHFSSCTHKCGDIQIPFPFGIGEIGCYLDEWYQVECRPSATSGKVFPFLPKINMEVVNISLPGTNDDIFYTYPSFSSIRVKSPVASMGCSTDGNDSGLTLNFTETPFFFGDQNNLVAVGCNNKASLTNVEPTMVGCESTCTTSNNSRSIPFFNKVGCSGSVDSVTRDLLPKNYIPVCSTTKIQDDTLICNGEGCCQAKAPVGSQQLIGVTITNSTNGNLTKGGGCKVAFLTDEVYTLSNATDPEQFFSKGVTVSLGWFIQTKNHSFLQSLDCQNRGELDKGKKRTRQCTCDNHIASGMGYASCACASGYKGNPYVSDDCQDINECTEYKNPCGDTRILYRNTCINTSGGHRCIDYHIPEVMLGLGAGFFVLIVGGGIWWWRKLLRKRRMTNRKRKFFKRNGGLLLQQQLNTTQGRVEKTKLFSSRELEKATDNFNDNRVIGQGGQGTVYKGMLVDGRSVAVKKSNVVDEDKLQEFINEVIILSQINHRHVVKLLGCCLETEVPILVYEFIPNGNLFQHLHEEFDDYTALWGVRMRIAVDISGAFSYLHTAACSPIYHRDIKSTNILLDEKYRAKVSDFGTSRSVSIDHTHWTTVISGTVGYVDPEYYGSSHFTEKSDVYSFGVVLVELITGEKPVITLSETQEITGLADYFRLAMRENRLFEIIDARIRNDCKLEQVIAVANLALRCLKKTGKTRPDMREVSTALERICSAPEDFQVQIQIDEEDETTKLFRGYSGSTEIARSM</sequence>
<reference key="1">
    <citation type="journal article" date="2000" name="Nature">
        <title>Sequence and analysis of chromosome 1 of the plant Arabidopsis thaliana.</title>
        <authorList>
            <person name="Theologis A."/>
            <person name="Ecker J.R."/>
            <person name="Palm C.J."/>
            <person name="Federspiel N.A."/>
            <person name="Kaul S."/>
            <person name="White O."/>
            <person name="Alonso J."/>
            <person name="Altafi H."/>
            <person name="Araujo R."/>
            <person name="Bowman C.L."/>
            <person name="Brooks S.Y."/>
            <person name="Buehler E."/>
            <person name="Chan A."/>
            <person name="Chao Q."/>
            <person name="Chen H."/>
            <person name="Cheuk R.F."/>
            <person name="Chin C.W."/>
            <person name="Chung M.K."/>
            <person name="Conn L."/>
            <person name="Conway A.B."/>
            <person name="Conway A.R."/>
            <person name="Creasy T.H."/>
            <person name="Dewar K."/>
            <person name="Dunn P."/>
            <person name="Etgu P."/>
            <person name="Feldblyum T.V."/>
            <person name="Feng J.-D."/>
            <person name="Fong B."/>
            <person name="Fujii C.Y."/>
            <person name="Gill J.E."/>
            <person name="Goldsmith A.D."/>
            <person name="Haas B."/>
            <person name="Hansen N.F."/>
            <person name="Hughes B."/>
            <person name="Huizar L."/>
            <person name="Hunter J.L."/>
            <person name="Jenkins J."/>
            <person name="Johnson-Hopson C."/>
            <person name="Khan S."/>
            <person name="Khaykin E."/>
            <person name="Kim C.J."/>
            <person name="Koo H.L."/>
            <person name="Kremenetskaia I."/>
            <person name="Kurtz D.B."/>
            <person name="Kwan A."/>
            <person name="Lam B."/>
            <person name="Langin-Hooper S."/>
            <person name="Lee A."/>
            <person name="Lee J.M."/>
            <person name="Lenz C.A."/>
            <person name="Li J.H."/>
            <person name="Li Y.-P."/>
            <person name="Lin X."/>
            <person name="Liu S.X."/>
            <person name="Liu Z.A."/>
            <person name="Luros J.S."/>
            <person name="Maiti R."/>
            <person name="Marziali A."/>
            <person name="Militscher J."/>
            <person name="Miranda M."/>
            <person name="Nguyen M."/>
            <person name="Nierman W.C."/>
            <person name="Osborne B.I."/>
            <person name="Pai G."/>
            <person name="Peterson J."/>
            <person name="Pham P.K."/>
            <person name="Rizzo M."/>
            <person name="Rooney T."/>
            <person name="Rowley D."/>
            <person name="Sakano H."/>
            <person name="Salzberg S.L."/>
            <person name="Schwartz J.R."/>
            <person name="Shinn P."/>
            <person name="Southwick A.M."/>
            <person name="Sun H."/>
            <person name="Tallon L.J."/>
            <person name="Tambunga G."/>
            <person name="Toriumi M.J."/>
            <person name="Town C.D."/>
            <person name="Utterback T."/>
            <person name="Van Aken S."/>
            <person name="Vaysberg M."/>
            <person name="Vysotskaia V.S."/>
            <person name="Walker M."/>
            <person name="Wu D."/>
            <person name="Yu G."/>
            <person name="Fraser C.M."/>
            <person name="Venter J.C."/>
            <person name="Davis R.W."/>
        </authorList>
    </citation>
    <scope>NUCLEOTIDE SEQUENCE [LARGE SCALE GENOMIC DNA]</scope>
    <source>
        <strain>cv. Columbia</strain>
    </source>
</reference>
<reference key="2">
    <citation type="journal article" date="2017" name="Plant J.">
        <title>Araport11: a complete reannotation of the Arabidopsis thaliana reference genome.</title>
        <authorList>
            <person name="Cheng C.Y."/>
            <person name="Krishnakumar V."/>
            <person name="Chan A.P."/>
            <person name="Thibaud-Nissen F."/>
            <person name="Schobel S."/>
            <person name="Town C.D."/>
        </authorList>
    </citation>
    <scope>GENOME REANNOTATION</scope>
    <source>
        <strain>cv. Columbia</strain>
    </source>
</reference>
<reference key="3">
    <citation type="journal article" date="2002" name="Plant Physiol.">
        <title>The cell wall-associated kinase (WAK) and WAK-like kinase gene family.</title>
        <authorList>
            <person name="Verica J.A."/>
            <person name="He Z.-H."/>
        </authorList>
    </citation>
    <scope>GENE FAMILY ORGANIZATION</scope>
</reference>